<comment type="function">
    <text evidence="1">K(+)/H(+) antiporter that extrudes potassium in exchange for external protons and maintains the internal concentration of potassium under toxic levels.</text>
</comment>
<comment type="catalytic activity">
    <reaction evidence="1">
        <text>K(+)(in) + H(+)(out) = K(+)(out) + H(+)(in)</text>
        <dbReference type="Rhea" id="RHEA:29467"/>
        <dbReference type="ChEBI" id="CHEBI:15378"/>
        <dbReference type="ChEBI" id="CHEBI:29103"/>
    </reaction>
    <physiologicalReaction direction="left-to-right" evidence="1">
        <dbReference type="Rhea" id="RHEA:29468"/>
    </physiologicalReaction>
</comment>
<comment type="subcellular location">
    <subcellularLocation>
        <location evidence="1">Cell inner membrane</location>
        <topology evidence="1">Multi-pass membrane protein</topology>
    </subcellularLocation>
</comment>
<comment type="similarity">
    <text evidence="1">Belongs to the monovalent cation:proton antiporter 1 (CPA1) transporter (TC 2.A.36) family. NhaP2 subfamily.</text>
</comment>
<name>NHAP2_KLEP3</name>
<evidence type="ECO:0000255" key="1">
    <source>
        <dbReference type="HAMAP-Rule" id="MF_01075"/>
    </source>
</evidence>
<keyword id="KW-0050">Antiport</keyword>
<keyword id="KW-0997">Cell inner membrane</keyword>
<keyword id="KW-1003">Cell membrane</keyword>
<keyword id="KW-0406">Ion transport</keyword>
<keyword id="KW-0472">Membrane</keyword>
<keyword id="KW-0630">Potassium</keyword>
<keyword id="KW-0633">Potassium transport</keyword>
<keyword id="KW-0812">Transmembrane</keyword>
<keyword id="KW-1133">Transmembrane helix</keyword>
<keyword id="KW-0813">Transport</keyword>
<feature type="chain" id="PRO_1000136707" description="K(+)/H(+) antiporter NhaP2">
    <location>
        <begin position="1"/>
        <end position="577"/>
    </location>
</feature>
<feature type="transmembrane region" description="Helical" evidence="1">
    <location>
        <begin position="3"/>
        <end position="23"/>
    </location>
</feature>
<feature type="transmembrane region" description="Helical" evidence="1">
    <location>
        <begin position="30"/>
        <end position="50"/>
    </location>
</feature>
<feature type="transmembrane region" description="Helical" evidence="1">
    <location>
        <begin position="58"/>
        <end position="78"/>
    </location>
</feature>
<feature type="transmembrane region" description="Helical" evidence="1">
    <location>
        <begin position="95"/>
        <end position="115"/>
    </location>
</feature>
<feature type="transmembrane region" description="Helical" evidence="1">
    <location>
        <begin position="122"/>
        <end position="142"/>
    </location>
</feature>
<feature type="transmembrane region" description="Helical" evidence="1">
    <location>
        <begin position="185"/>
        <end position="205"/>
    </location>
</feature>
<feature type="transmembrane region" description="Helical" evidence="1">
    <location>
        <begin position="216"/>
        <end position="236"/>
    </location>
</feature>
<feature type="transmembrane region" description="Helical" evidence="1">
    <location>
        <begin position="237"/>
        <end position="257"/>
    </location>
</feature>
<feature type="transmembrane region" description="Helical" evidence="1">
    <location>
        <begin position="280"/>
        <end position="300"/>
    </location>
</feature>
<feature type="transmembrane region" description="Helical" evidence="1">
    <location>
        <begin position="303"/>
        <end position="323"/>
    </location>
</feature>
<feature type="transmembrane region" description="Helical" evidence="1">
    <location>
        <begin position="334"/>
        <end position="354"/>
    </location>
</feature>
<feature type="transmembrane region" description="Helical" evidence="1">
    <location>
        <begin position="363"/>
        <end position="383"/>
    </location>
</feature>
<feature type="domain" description="RCK C-terminal" evidence="1">
    <location>
        <begin position="403"/>
        <end position="485"/>
    </location>
</feature>
<gene>
    <name evidence="1" type="primary">nhaP2</name>
    <name type="synonym">cvrA</name>
    <name type="ordered locus">KPK_1987</name>
</gene>
<sequence length="577" mass="62160">MDAAAVISLFILGSVLVTCSILLSSFSSRLGIPILVIFLAIGMLAGIDGIGGIPFDNYPFAYMVSNLALAVILLDGGMRTQASSFRVALWPALSLATVGVLITSALTGMMAAWLFKLDMIEGLLIGAIVGSTDAAAVFSLLGGKGLNERVGSTLEIESGSNDPMAVFLTITLIEMIQQHQTGLSWMFAVHIIQQFGLGIAIGLGGGYLLLQMINRIVLPAGLYPLLALSGGIMIFAVTTTLDGSGILAVYLCGFLLGNRPIRNRHGILQNFDGLAWLAQIAMFLVLGLLVTPSDLLPIAIPALLLSMWMIFIARPLSVFAGLLPFRGFNLRERVFISWVGLRGAVPIILAVFPMMAGLDNARLFFNVAFFVVLVSLLLQGTSLSWAAKKAKVVVPPISWPISRVGLDIHPENPWEQFVYQLGADKWCIGAALRDLHMPPETRIAALFRNNALLHPTGSTRLREGDILCVIGREHDLPALGKMFSQSPPVALDQRFFGDFILDAEARFADVAQIYGLDGGEEFREHQQSLGEVVQQLLGAAPVVGDQVEFAGMVWTVAEKENDHVLKVGVRVAEDEAE</sequence>
<accession>B5XQ83</accession>
<organism>
    <name type="scientific">Klebsiella pneumoniae (strain 342)</name>
    <dbReference type="NCBI Taxonomy" id="507522"/>
    <lineage>
        <taxon>Bacteria</taxon>
        <taxon>Pseudomonadati</taxon>
        <taxon>Pseudomonadota</taxon>
        <taxon>Gammaproteobacteria</taxon>
        <taxon>Enterobacterales</taxon>
        <taxon>Enterobacteriaceae</taxon>
        <taxon>Klebsiella/Raoultella group</taxon>
        <taxon>Klebsiella</taxon>
        <taxon>Klebsiella pneumoniae complex</taxon>
    </lineage>
</organism>
<proteinExistence type="inferred from homology"/>
<dbReference type="EMBL" id="CP000964">
    <property type="protein sequence ID" value="ACI09508.1"/>
    <property type="molecule type" value="Genomic_DNA"/>
</dbReference>
<dbReference type="SMR" id="B5XQ83"/>
<dbReference type="KEGG" id="kpe:KPK_1987"/>
<dbReference type="HOGENOM" id="CLU_005912_9_2_6"/>
<dbReference type="Proteomes" id="UP000001734">
    <property type="component" value="Chromosome"/>
</dbReference>
<dbReference type="GO" id="GO:0005886">
    <property type="term" value="C:plasma membrane"/>
    <property type="evidence" value="ECO:0007669"/>
    <property type="project" value="UniProtKB-SubCell"/>
</dbReference>
<dbReference type="GO" id="GO:0050660">
    <property type="term" value="F:flavin adenine dinucleotide binding"/>
    <property type="evidence" value="ECO:0007669"/>
    <property type="project" value="InterPro"/>
</dbReference>
<dbReference type="GO" id="GO:0015386">
    <property type="term" value="F:potassium:proton antiporter activity"/>
    <property type="evidence" value="ECO:0007669"/>
    <property type="project" value="UniProtKB-UniRule"/>
</dbReference>
<dbReference type="GO" id="GO:0006884">
    <property type="term" value="P:cell volume homeostasis"/>
    <property type="evidence" value="ECO:0007669"/>
    <property type="project" value="InterPro"/>
</dbReference>
<dbReference type="FunFam" id="1.20.1530.20:FF:000002">
    <property type="entry name" value="K(+)/H(+) antiporter NhaP2"/>
    <property type="match status" value="1"/>
</dbReference>
<dbReference type="Gene3D" id="1.20.1530.20">
    <property type="match status" value="1"/>
</dbReference>
<dbReference type="Gene3D" id="3.30.465.10">
    <property type="match status" value="1"/>
</dbReference>
<dbReference type="Gene3D" id="3.30.70.1450">
    <property type="entry name" value="Regulator of K+ conductance, C-terminal domain"/>
    <property type="match status" value="1"/>
</dbReference>
<dbReference type="HAMAP" id="MF_01075">
    <property type="entry name" value="NhaP2"/>
    <property type="match status" value="1"/>
</dbReference>
<dbReference type="InterPro" id="IPR006153">
    <property type="entry name" value="Cation/H_exchanger_TM"/>
</dbReference>
<dbReference type="InterPro" id="IPR036318">
    <property type="entry name" value="FAD-bd_PCMH-like_sf"/>
</dbReference>
<dbReference type="InterPro" id="IPR016169">
    <property type="entry name" value="FAD-bd_PCMH_sub2"/>
</dbReference>
<dbReference type="InterPro" id="IPR038770">
    <property type="entry name" value="Na+/solute_symporter_sf"/>
</dbReference>
<dbReference type="InterPro" id="IPR023729">
    <property type="entry name" value="NhaP2"/>
</dbReference>
<dbReference type="InterPro" id="IPR006037">
    <property type="entry name" value="RCK_C"/>
</dbReference>
<dbReference type="InterPro" id="IPR036721">
    <property type="entry name" value="RCK_C_sf"/>
</dbReference>
<dbReference type="InterPro" id="IPR005170">
    <property type="entry name" value="Transptr-assoc_dom"/>
</dbReference>
<dbReference type="NCBIfam" id="NF003714">
    <property type="entry name" value="PRK05326.1-1"/>
    <property type="match status" value="1"/>
</dbReference>
<dbReference type="NCBIfam" id="NF003715">
    <property type="entry name" value="PRK05326.1-2"/>
    <property type="match status" value="1"/>
</dbReference>
<dbReference type="NCBIfam" id="NF003716">
    <property type="entry name" value="PRK05326.1-3"/>
    <property type="match status" value="1"/>
</dbReference>
<dbReference type="PANTHER" id="PTHR32507:SF7">
    <property type="entry name" value="K(+)_H(+) ANTIPORTER NHAP2"/>
    <property type="match status" value="1"/>
</dbReference>
<dbReference type="PANTHER" id="PTHR32507">
    <property type="entry name" value="NA(+)/H(+) ANTIPORTER 1"/>
    <property type="match status" value="1"/>
</dbReference>
<dbReference type="Pfam" id="PF03471">
    <property type="entry name" value="CorC_HlyC"/>
    <property type="match status" value="1"/>
</dbReference>
<dbReference type="Pfam" id="PF00999">
    <property type="entry name" value="Na_H_Exchanger"/>
    <property type="match status" value="1"/>
</dbReference>
<dbReference type="Pfam" id="PF02080">
    <property type="entry name" value="TrkA_C"/>
    <property type="match status" value="1"/>
</dbReference>
<dbReference type="SMART" id="SM01091">
    <property type="entry name" value="CorC_HlyC"/>
    <property type="match status" value="1"/>
</dbReference>
<dbReference type="SUPFAM" id="SSF56176">
    <property type="entry name" value="FAD-binding/transporter-associated domain-like"/>
    <property type="match status" value="1"/>
</dbReference>
<dbReference type="SUPFAM" id="SSF116726">
    <property type="entry name" value="TrkA C-terminal domain-like"/>
    <property type="match status" value="1"/>
</dbReference>
<dbReference type="PROSITE" id="PS51202">
    <property type="entry name" value="RCK_C"/>
    <property type="match status" value="1"/>
</dbReference>
<protein>
    <recommendedName>
        <fullName evidence="1">K(+)/H(+) antiporter NhaP2</fullName>
    </recommendedName>
    <alternativeName>
        <fullName evidence="1">Potassium/proton antiporter NhaP2</fullName>
    </alternativeName>
</protein>
<reference key="1">
    <citation type="journal article" date="2008" name="PLoS Genet.">
        <title>Complete genome sequence of the N2-fixing broad host range endophyte Klebsiella pneumoniae 342 and virulence predictions verified in mice.</title>
        <authorList>
            <person name="Fouts D.E."/>
            <person name="Tyler H.L."/>
            <person name="DeBoy R.T."/>
            <person name="Daugherty S."/>
            <person name="Ren Q."/>
            <person name="Badger J.H."/>
            <person name="Durkin A.S."/>
            <person name="Huot H."/>
            <person name="Shrivastava S."/>
            <person name="Kothari S."/>
            <person name="Dodson R.J."/>
            <person name="Mohamoud Y."/>
            <person name="Khouri H."/>
            <person name="Roesch L.F.W."/>
            <person name="Krogfelt K.A."/>
            <person name="Struve C."/>
            <person name="Triplett E.W."/>
            <person name="Methe B.A."/>
        </authorList>
    </citation>
    <scope>NUCLEOTIDE SEQUENCE [LARGE SCALE GENOMIC DNA]</scope>
    <source>
        <strain>342</strain>
    </source>
</reference>